<organism>
    <name type="scientific">Synechococcus sp. (strain ATCC 27144 / PCC 6301 / SAUG 1402/1)</name>
    <name type="common">Anacystis nidulans</name>
    <dbReference type="NCBI Taxonomy" id="269084"/>
    <lineage>
        <taxon>Bacteria</taxon>
        <taxon>Bacillati</taxon>
        <taxon>Cyanobacteriota</taxon>
        <taxon>Cyanophyceae</taxon>
        <taxon>Synechococcales</taxon>
        <taxon>Synechococcaceae</taxon>
        <taxon>Synechococcus</taxon>
    </lineage>
</organism>
<keyword id="KW-0012">Acyltransferase</keyword>
<keyword id="KW-0963">Cytoplasm</keyword>
<keyword id="KW-0808">Transferase</keyword>
<name>LIPB_SYNP6</name>
<comment type="function">
    <text evidence="1">Catalyzes the transfer of endogenously produced octanoic acid from octanoyl-acyl-carrier-protein onto the lipoyl domains of lipoate-dependent enzymes. Lipoyl-ACP can also act as a substrate although octanoyl-ACP is likely to be the physiological substrate.</text>
</comment>
<comment type="catalytic activity">
    <reaction evidence="1">
        <text>octanoyl-[ACP] + L-lysyl-[protein] = N(6)-octanoyl-L-lysyl-[protein] + holo-[ACP] + H(+)</text>
        <dbReference type="Rhea" id="RHEA:17665"/>
        <dbReference type="Rhea" id="RHEA-COMP:9636"/>
        <dbReference type="Rhea" id="RHEA-COMP:9685"/>
        <dbReference type="Rhea" id="RHEA-COMP:9752"/>
        <dbReference type="Rhea" id="RHEA-COMP:9928"/>
        <dbReference type="ChEBI" id="CHEBI:15378"/>
        <dbReference type="ChEBI" id="CHEBI:29969"/>
        <dbReference type="ChEBI" id="CHEBI:64479"/>
        <dbReference type="ChEBI" id="CHEBI:78463"/>
        <dbReference type="ChEBI" id="CHEBI:78809"/>
        <dbReference type="EC" id="2.3.1.181"/>
    </reaction>
</comment>
<comment type="pathway">
    <text evidence="1">Protein modification; protein lipoylation via endogenous pathway; protein N(6)-(lipoyl)lysine from octanoyl-[acyl-carrier-protein]: step 1/2.</text>
</comment>
<comment type="subcellular location">
    <subcellularLocation>
        <location evidence="1">Cytoplasm</location>
    </subcellularLocation>
</comment>
<comment type="miscellaneous">
    <text evidence="1">In the reaction, the free carboxyl group of octanoic acid is attached via an amide linkage to the epsilon-amino group of a specific lysine residue of lipoyl domains of lipoate-dependent enzymes.</text>
</comment>
<comment type="similarity">
    <text evidence="1">Belongs to the LipB family.</text>
</comment>
<dbReference type="EC" id="2.3.1.181" evidence="1"/>
<dbReference type="EMBL" id="AP008231">
    <property type="protein sequence ID" value="BAD79940.1"/>
    <property type="molecule type" value="Genomic_DNA"/>
</dbReference>
<dbReference type="RefSeq" id="WP_011244060.1">
    <property type="nucleotide sequence ID" value="NZ_CP085785.1"/>
</dbReference>
<dbReference type="SMR" id="Q5N180"/>
<dbReference type="GeneID" id="72431240"/>
<dbReference type="KEGG" id="syc:syc1750_c"/>
<dbReference type="eggNOG" id="COG0321">
    <property type="taxonomic scope" value="Bacteria"/>
</dbReference>
<dbReference type="UniPathway" id="UPA00538">
    <property type="reaction ID" value="UER00592"/>
</dbReference>
<dbReference type="Proteomes" id="UP000001175">
    <property type="component" value="Chromosome"/>
</dbReference>
<dbReference type="GO" id="GO:0005737">
    <property type="term" value="C:cytoplasm"/>
    <property type="evidence" value="ECO:0007669"/>
    <property type="project" value="UniProtKB-SubCell"/>
</dbReference>
<dbReference type="GO" id="GO:0033819">
    <property type="term" value="F:lipoyl(octanoyl) transferase activity"/>
    <property type="evidence" value="ECO:0007669"/>
    <property type="project" value="UniProtKB-EC"/>
</dbReference>
<dbReference type="GO" id="GO:0036211">
    <property type="term" value="P:protein modification process"/>
    <property type="evidence" value="ECO:0007669"/>
    <property type="project" value="InterPro"/>
</dbReference>
<dbReference type="CDD" id="cd16444">
    <property type="entry name" value="LipB"/>
    <property type="match status" value="1"/>
</dbReference>
<dbReference type="Gene3D" id="3.30.930.10">
    <property type="entry name" value="Bira Bifunctional Protein, Domain 2"/>
    <property type="match status" value="1"/>
</dbReference>
<dbReference type="HAMAP" id="MF_00013">
    <property type="entry name" value="LipB"/>
    <property type="match status" value="1"/>
</dbReference>
<dbReference type="InterPro" id="IPR045864">
    <property type="entry name" value="aa-tRNA-synth_II/BPL/LPL"/>
</dbReference>
<dbReference type="InterPro" id="IPR004143">
    <property type="entry name" value="BPL_LPL_catalytic"/>
</dbReference>
<dbReference type="InterPro" id="IPR000544">
    <property type="entry name" value="Octanoyltransferase"/>
</dbReference>
<dbReference type="InterPro" id="IPR020605">
    <property type="entry name" value="Octanoyltransferase_CS"/>
</dbReference>
<dbReference type="NCBIfam" id="TIGR00214">
    <property type="entry name" value="lipB"/>
    <property type="match status" value="1"/>
</dbReference>
<dbReference type="NCBIfam" id="NF010925">
    <property type="entry name" value="PRK14345.1"/>
    <property type="match status" value="1"/>
</dbReference>
<dbReference type="PANTHER" id="PTHR10993:SF7">
    <property type="entry name" value="LIPOYLTRANSFERASE 2, MITOCHONDRIAL-RELATED"/>
    <property type="match status" value="1"/>
</dbReference>
<dbReference type="PANTHER" id="PTHR10993">
    <property type="entry name" value="OCTANOYLTRANSFERASE"/>
    <property type="match status" value="1"/>
</dbReference>
<dbReference type="Pfam" id="PF21948">
    <property type="entry name" value="LplA-B_cat"/>
    <property type="match status" value="1"/>
</dbReference>
<dbReference type="PIRSF" id="PIRSF016262">
    <property type="entry name" value="LPLase"/>
    <property type="match status" value="1"/>
</dbReference>
<dbReference type="SUPFAM" id="SSF55681">
    <property type="entry name" value="Class II aaRS and biotin synthetases"/>
    <property type="match status" value="1"/>
</dbReference>
<dbReference type="PROSITE" id="PS51733">
    <property type="entry name" value="BPL_LPL_CATALYTIC"/>
    <property type="match status" value="1"/>
</dbReference>
<dbReference type="PROSITE" id="PS01313">
    <property type="entry name" value="LIPB"/>
    <property type="match status" value="1"/>
</dbReference>
<feature type="chain" id="PRO_0000242770" description="Octanoyltransferase">
    <location>
        <begin position="1"/>
        <end position="233"/>
    </location>
</feature>
<feature type="domain" description="BPL/LPL catalytic" evidence="2">
    <location>
        <begin position="34"/>
        <end position="212"/>
    </location>
</feature>
<feature type="active site" description="Acyl-thioester intermediate" evidence="1">
    <location>
        <position position="174"/>
    </location>
</feature>
<feature type="binding site" evidence="1">
    <location>
        <begin position="76"/>
        <end position="83"/>
    </location>
    <ligand>
        <name>substrate</name>
    </ligand>
</feature>
<feature type="binding site" evidence="1">
    <location>
        <begin position="143"/>
        <end position="145"/>
    </location>
    <ligand>
        <name>substrate</name>
    </ligand>
</feature>
<feature type="binding site" evidence="1">
    <location>
        <begin position="156"/>
        <end position="158"/>
    </location>
    <ligand>
        <name>substrate</name>
    </ligand>
</feature>
<feature type="site" description="Lowers pKa of active site Cys" evidence="1">
    <location>
        <position position="140"/>
    </location>
</feature>
<evidence type="ECO:0000255" key="1">
    <source>
        <dbReference type="HAMAP-Rule" id="MF_00013"/>
    </source>
</evidence>
<evidence type="ECO:0000255" key="2">
    <source>
        <dbReference type="PROSITE-ProRule" id="PRU01067"/>
    </source>
</evidence>
<reference key="1">
    <citation type="journal article" date="2007" name="Photosyn. Res.">
        <title>Complete nucleotide sequence of the freshwater unicellular cyanobacterium Synechococcus elongatus PCC 6301 chromosome: gene content and organization.</title>
        <authorList>
            <person name="Sugita C."/>
            <person name="Ogata K."/>
            <person name="Shikata M."/>
            <person name="Jikuya H."/>
            <person name="Takano J."/>
            <person name="Furumichi M."/>
            <person name="Kanehisa M."/>
            <person name="Omata T."/>
            <person name="Sugiura M."/>
            <person name="Sugita M."/>
        </authorList>
    </citation>
    <scope>NUCLEOTIDE SEQUENCE [LARGE SCALE GENOMIC DNA]</scope>
    <source>
        <strain>ATCC 27144 / PCC 6301 / SAUG 1402/1</strain>
    </source>
</reference>
<sequence>MSARAAWLVQAGCLDYAQVWAWQRQLQDNRRNNPDRPDVLLLLEHPAVYTLGRGSSLAHLKFDPQHPPAPVYRIERGGEVTHHAPGQLVGYPILNLRHHRCDLHWYLRQLEAVLILVLANYGLTGERIEGLTGVWVEGKKLAAIGIQVSRWISLHGFALNVCPDLAGFEAIVPCGISDRAVGSLVEFCPDVRLEVVRSQVAGAFAQTFELDLQPCSLEQLQAEENLTAIAGDP</sequence>
<gene>
    <name evidence="1" type="primary">lipB</name>
    <name type="ordered locus">syc1750_c</name>
</gene>
<protein>
    <recommendedName>
        <fullName evidence="1">Octanoyltransferase</fullName>
        <ecNumber evidence="1">2.3.1.181</ecNumber>
    </recommendedName>
    <alternativeName>
        <fullName evidence="1">Lipoate-protein ligase B</fullName>
    </alternativeName>
    <alternativeName>
        <fullName evidence="1">Lipoyl/octanoyl transferase</fullName>
    </alternativeName>
    <alternativeName>
        <fullName evidence="1">Octanoyl-[acyl-carrier-protein]-protein N-octanoyltransferase</fullName>
    </alternativeName>
</protein>
<accession>Q5N180</accession>
<proteinExistence type="inferred from homology"/>